<name>NDUV2_RAT</name>
<accession>P19234</accession>
<accession>Q6PDU9</accession>
<reference key="1">
    <citation type="journal article" date="2004" name="Genome Res.">
        <title>The status, quality, and expansion of the NIH full-length cDNA project: the Mammalian Gene Collection (MGC).</title>
        <authorList>
            <consortium name="The MGC Project Team"/>
        </authorList>
    </citation>
    <scope>NUCLEOTIDE SEQUENCE [LARGE SCALE MRNA]</scope>
    <source>
        <tissue>Pituitary</tissue>
    </source>
</reference>
<reference key="2">
    <citation type="journal article" date="1988" name="Biochem. Biophys. Res. Commun.">
        <title>The amino acid sequence of the 24-kDa subunit, an iron-sulfur protein, of rat liver mitochondrial NADH dehydrogenase deduced from cDNA sequence.</title>
        <authorList>
            <person name="Nishikimi M."/>
            <person name="Hosokawa Y."/>
            <person name="Toda H."/>
            <person name="Suzuki H."/>
            <person name="Ozawa T."/>
        </authorList>
    </citation>
    <scope>NUCLEOTIDE SEQUENCE [MRNA] OF 8-248</scope>
</reference>
<reference key="3">
    <citation type="submission" date="2007-04" db="UniProtKB">
        <authorList>
            <person name="Lubec G."/>
            <person name="Chen W.-Q."/>
        </authorList>
    </citation>
    <scope>PROTEIN SEQUENCE OF 42-61; 75-87; 199-208 AND 222-248</scope>
    <scope>IDENTIFICATION BY MASS SPECTROMETRY</scope>
    <source>
        <strain>Sprague-Dawley</strain>
        <tissue>Hippocampus</tissue>
    </source>
</reference>
<gene>
    <name evidence="6" type="primary">Ndufv2</name>
</gene>
<comment type="function">
    <text evidence="2">Core subunit of the mitochondrial membrane respiratory chain NADH dehydrogenase (Complex I) which catalyzes electron transfer from NADH through the respiratory chain, using ubiquinone as an electron acceptor. Parts of the peripheral arm of the enzyme, where the electrons from NADH are accepted by flavin mononucleotide (FMN) and then passed along a chain of iron-sulfur clusters by electron tunnelling to the final acceptor ubiquinone. Contains one iron-sulfur cluster.</text>
</comment>
<comment type="catalytic activity">
    <reaction evidence="2">
        <text>a ubiquinone + NADH + 5 H(+)(in) = a ubiquinol + NAD(+) + 4 H(+)(out)</text>
        <dbReference type="Rhea" id="RHEA:29091"/>
        <dbReference type="Rhea" id="RHEA-COMP:9565"/>
        <dbReference type="Rhea" id="RHEA-COMP:9566"/>
        <dbReference type="ChEBI" id="CHEBI:15378"/>
        <dbReference type="ChEBI" id="CHEBI:16389"/>
        <dbReference type="ChEBI" id="CHEBI:17976"/>
        <dbReference type="ChEBI" id="CHEBI:57540"/>
        <dbReference type="ChEBI" id="CHEBI:57945"/>
        <dbReference type="EC" id="7.1.1.2"/>
    </reaction>
    <physiologicalReaction direction="left-to-right" evidence="2">
        <dbReference type="Rhea" id="RHEA:29092"/>
    </physiologicalReaction>
</comment>
<comment type="cofactor">
    <cofactor evidence="2">
        <name>[2Fe-2S] cluster</name>
        <dbReference type="ChEBI" id="CHEBI:190135"/>
    </cofactor>
    <text evidence="2">Binds 1 [2Fe-2S] cluster.</text>
</comment>
<comment type="subunit">
    <text evidence="1">Core subunit of respiratory chain NADH dehydrogenase (Complex I) which is composed of 45 different subunits. This is a component of the flavoprotein-sulfur (FP) fragment of the enzyme (By similarity).</text>
</comment>
<comment type="subcellular location">
    <subcellularLocation>
        <location evidence="1">Mitochondrion inner membrane</location>
        <topology evidence="1">Peripheral membrane protein</topology>
        <orientation evidence="1">Matrix side</orientation>
    </subcellularLocation>
</comment>
<comment type="similarity">
    <text evidence="5">Belongs to the complex I 24 kDa subunit family.</text>
</comment>
<keyword id="KW-0001">2Fe-2S</keyword>
<keyword id="KW-0903">Direct protein sequencing</keyword>
<keyword id="KW-0249">Electron transport</keyword>
<keyword id="KW-0408">Iron</keyword>
<keyword id="KW-0411">Iron-sulfur</keyword>
<keyword id="KW-0472">Membrane</keyword>
<keyword id="KW-0479">Metal-binding</keyword>
<keyword id="KW-0496">Mitochondrion</keyword>
<keyword id="KW-0999">Mitochondrion inner membrane</keyword>
<keyword id="KW-0520">NAD</keyword>
<keyword id="KW-0560">Oxidoreductase</keyword>
<keyword id="KW-0597">Phosphoprotein</keyword>
<keyword id="KW-1185">Reference proteome</keyword>
<keyword id="KW-0679">Respiratory chain</keyword>
<keyword id="KW-0809">Transit peptide</keyword>
<keyword id="KW-1278">Translocase</keyword>
<keyword id="KW-0813">Transport</keyword>
<keyword id="KW-0830">Ubiquinone</keyword>
<protein>
    <recommendedName>
        <fullName evidence="2">NADH dehydrogenase [ubiquinone] flavoprotein 2, mitochondrial</fullName>
        <ecNumber evidence="2">7.1.1.2</ecNumber>
    </recommendedName>
    <alternativeName>
        <fullName>NADH-ubiquinone oxidoreductase 24 kDa subunit</fullName>
    </alternativeName>
</protein>
<evidence type="ECO:0000250" key="1">
    <source>
        <dbReference type="UniProtKB" id="P04394"/>
    </source>
</evidence>
<evidence type="ECO:0000250" key="2">
    <source>
        <dbReference type="UniProtKB" id="P19404"/>
    </source>
</evidence>
<evidence type="ECO:0000255" key="3"/>
<evidence type="ECO:0000256" key="4">
    <source>
        <dbReference type="SAM" id="MobiDB-lite"/>
    </source>
</evidence>
<evidence type="ECO:0000305" key="5"/>
<evidence type="ECO:0000312" key="6">
    <source>
        <dbReference type="RGD" id="621733"/>
    </source>
</evidence>
<feature type="transit peptide" description="Mitochondrion" evidence="3">
    <location>
        <begin position="1"/>
        <end position="31"/>
    </location>
</feature>
<feature type="chain" id="PRO_0000020005" description="NADH dehydrogenase [ubiquinone] flavoprotein 2, mitochondrial">
    <location>
        <begin position="32"/>
        <end position="248"/>
    </location>
</feature>
<feature type="region of interest" description="Disordered" evidence="4">
    <location>
        <begin position="229"/>
        <end position="248"/>
    </location>
</feature>
<feature type="binding site" evidence="1">
    <location>
        <position position="134"/>
    </location>
    <ligand>
        <name>[2Fe-2S] cluster</name>
        <dbReference type="ChEBI" id="CHEBI:190135"/>
    </ligand>
</feature>
<feature type="binding site" evidence="1">
    <location>
        <position position="139"/>
    </location>
    <ligand>
        <name>[2Fe-2S] cluster</name>
        <dbReference type="ChEBI" id="CHEBI:190135"/>
    </ligand>
</feature>
<feature type="binding site" evidence="2">
    <location>
        <position position="175"/>
    </location>
    <ligand>
        <name>[2Fe-2S] cluster</name>
        <dbReference type="ChEBI" id="CHEBI:190135"/>
    </ligand>
</feature>
<feature type="binding site" evidence="2">
    <location>
        <position position="179"/>
    </location>
    <ligand>
        <name>[2Fe-2S] cluster</name>
        <dbReference type="ChEBI" id="CHEBI:190135"/>
    </ligand>
</feature>
<feature type="modified residue" description="Phosphotyrosine; by SRC" evidence="2">
    <location>
        <position position="192"/>
    </location>
</feature>
<feature type="sequence conflict" description="In Ref. 2; AAA41669." evidence="5" ref="2">
    <original>Q</original>
    <variation>P</variation>
    <location>
        <position position="245"/>
    </location>
</feature>
<dbReference type="EC" id="7.1.1.2" evidence="2"/>
<dbReference type="EMBL" id="BC058495">
    <property type="protein sequence ID" value="AAH58495.1"/>
    <property type="molecule type" value="mRNA"/>
</dbReference>
<dbReference type="EMBL" id="M22756">
    <property type="protein sequence ID" value="AAA41669.1"/>
    <property type="molecule type" value="mRNA"/>
</dbReference>
<dbReference type="PIR" id="A31868">
    <property type="entry name" value="A31868"/>
</dbReference>
<dbReference type="RefSeq" id="NP_112326.1">
    <property type="nucleotide sequence ID" value="NM_031064.2"/>
</dbReference>
<dbReference type="SMR" id="P19234"/>
<dbReference type="BioGRID" id="249601">
    <property type="interactions" value="5"/>
</dbReference>
<dbReference type="FunCoup" id="P19234">
    <property type="interactions" value="2241"/>
</dbReference>
<dbReference type="IntAct" id="P19234">
    <property type="interactions" value="2"/>
</dbReference>
<dbReference type="MINT" id="P19234"/>
<dbReference type="STRING" id="10116.ENSRNOP00000016965"/>
<dbReference type="GlyGen" id="P19234">
    <property type="glycosylation" value="1 site, 1 O-linked glycan (1 site)"/>
</dbReference>
<dbReference type="iPTMnet" id="P19234"/>
<dbReference type="PhosphoSitePlus" id="P19234"/>
<dbReference type="SwissPalm" id="P19234"/>
<dbReference type="jPOST" id="P19234"/>
<dbReference type="PaxDb" id="10116-ENSRNOP00000016965"/>
<dbReference type="Ensembl" id="ENSRNOT00000016965.6">
    <property type="protein sequence ID" value="ENSRNOP00000016965.4"/>
    <property type="gene ID" value="ENSRNOG00000042503.3"/>
</dbReference>
<dbReference type="GeneID" id="81728"/>
<dbReference type="KEGG" id="rno:81728"/>
<dbReference type="AGR" id="RGD:621733"/>
<dbReference type="CTD" id="4729"/>
<dbReference type="RGD" id="621733">
    <property type="gene designation" value="Ndufv2"/>
</dbReference>
<dbReference type="eggNOG" id="KOG3196">
    <property type="taxonomic scope" value="Eukaryota"/>
</dbReference>
<dbReference type="GeneTree" id="ENSGT00390000017580"/>
<dbReference type="HOGENOM" id="CLU_054362_1_1_1"/>
<dbReference type="InParanoid" id="P19234"/>
<dbReference type="OrthoDB" id="10254187at2759"/>
<dbReference type="PhylomeDB" id="P19234"/>
<dbReference type="TreeFam" id="TF300004"/>
<dbReference type="Reactome" id="R-RNO-611105">
    <property type="pathway name" value="Respiratory electron transport"/>
</dbReference>
<dbReference type="Reactome" id="R-RNO-6799198">
    <property type="pathway name" value="Complex I biogenesis"/>
</dbReference>
<dbReference type="PRO" id="PR:P19234"/>
<dbReference type="Proteomes" id="UP000002494">
    <property type="component" value="Chromosome 9"/>
</dbReference>
<dbReference type="Bgee" id="ENSRNOG00000042503">
    <property type="expression patterns" value="Expressed in heart and 20 other cell types or tissues"/>
</dbReference>
<dbReference type="GO" id="GO:0005743">
    <property type="term" value="C:mitochondrial inner membrane"/>
    <property type="evidence" value="ECO:0000250"/>
    <property type="project" value="UniProtKB"/>
</dbReference>
<dbReference type="GO" id="GO:0005739">
    <property type="term" value="C:mitochondrion"/>
    <property type="evidence" value="ECO:0000266"/>
    <property type="project" value="RGD"/>
</dbReference>
<dbReference type="GO" id="GO:0045271">
    <property type="term" value="C:respiratory chain complex I"/>
    <property type="evidence" value="ECO:0000250"/>
    <property type="project" value="UniProtKB"/>
</dbReference>
<dbReference type="GO" id="GO:0051537">
    <property type="term" value="F:2 iron, 2 sulfur cluster binding"/>
    <property type="evidence" value="ECO:0007669"/>
    <property type="project" value="UniProtKB-KW"/>
</dbReference>
<dbReference type="GO" id="GO:0046872">
    <property type="term" value="F:metal ion binding"/>
    <property type="evidence" value="ECO:0007669"/>
    <property type="project" value="UniProtKB-KW"/>
</dbReference>
<dbReference type="GO" id="GO:0008137">
    <property type="term" value="F:NADH dehydrogenase (ubiquinone) activity"/>
    <property type="evidence" value="ECO:0000250"/>
    <property type="project" value="UniProtKB"/>
</dbReference>
<dbReference type="GO" id="GO:0048738">
    <property type="term" value="P:cardiac muscle tissue development"/>
    <property type="evidence" value="ECO:0000266"/>
    <property type="project" value="RGD"/>
</dbReference>
<dbReference type="GO" id="GO:0006120">
    <property type="term" value="P:mitochondrial electron transport, NADH to ubiquinone"/>
    <property type="evidence" value="ECO:0000250"/>
    <property type="project" value="UniProtKB"/>
</dbReference>
<dbReference type="GO" id="GO:0007399">
    <property type="term" value="P:nervous system development"/>
    <property type="evidence" value="ECO:0000266"/>
    <property type="project" value="RGD"/>
</dbReference>
<dbReference type="CDD" id="cd03064">
    <property type="entry name" value="TRX_Fd_NuoE"/>
    <property type="match status" value="1"/>
</dbReference>
<dbReference type="FunFam" id="3.40.30.10:FF:000022">
    <property type="entry name" value="NADH dehydrogenase flavoprotein 2, mitochondrial"/>
    <property type="match status" value="1"/>
</dbReference>
<dbReference type="FunFam" id="1.10.10.1590:FF:000001">
    <property type="entry name" value="NADH-quinone oxidoreductase subunit E"/>
    <property type="match status" value="1"/>
</dbReference>
<dbReference type="Gene3D" id="3.40.30.10">
    <property type="entry name" value="Glutaredoxin"/>
    <property type="match status" value="1"/>
</dbReference>
<dbReference type="Gene3D" id="1.10.10.1590">
    <property type="entry name" value="NADH-quinone oxidoreductase subunit E"/>
    <property type="match status" value="1"/>
</dbReference>
<dbReference type="InterPro" id="IPR002023">
    <property type="entry name" value="NuoE-like"/>
</dbReference>
<dbReference type="InterPro" id="IPR042128">
    <property type="entry name" value="NuoE_dom"/>
</dbReference>
<dbReference type="InterPro" id="IPR041921">
    <property type="entry name" value="NuoE_N"/>
</dbReference>
<dbReference type="InterPro" id="IPR036249">
    <property type="entry name" value="Thioredoxin-like_sf"/>
</dbReference>
<dbReference type="NCBIfam" id="TIGR01958">
    <property type="entry name" value="nuoE_fam"/>
    <property type="match status" value="1"/>
</dbReference>
<dbReference type="NCBIfam" id="NF005722">
    <property type="entry name" value="PRK07539.1-2"/>
    <property type="match status" value="1"/>
</dbReference>
<dbReference type="NCBIfam" id="NF005725">
    <property type="entry name" value="PRK07539.1-5"/>
    <property type="match status" value="1"/>
</dbReference>
<dbReference type="PANTHER" id="PTHR10371:SF3">
    <property type="entry name" value="NADH DEHYDROGENASE [UBIQUINONE] FLAVOPROTEIN 2, MITOCHONDRIAL"/>
    <property type="match status" value="1"/>
</dbReference>
<dbReference type="PANTHER" id="PTHR10371">
    <property type="entry name" value="NADH DEHYDROGENASE UBIQUINONE FLAVOPROTEIN 2, MITOCHONDRIAL"/>
    <property type="match status" value="1"/>
</dbReference>
<dbReference type="Pfam" id="PF01257">
    <property type="entry name" value="2Fe-2S_thioredx"/>
    <property type="match status" value="1"/>
</dbReference>
<dbReference type="PIRSF" id="PIRSF000216">
    <property type="entry name" value="NADH_DH_24kDa"/>
    <property type="match status" value="1"/>
</dbReference>
<dbReference type="SUPFAM" id="SSF52833">
    <property type="entry name" value="Thioredoxin-like"/>
    <property type="match status" value="1"/>
</dbReference>
<dbReference type="PROSITE" id="PS01099">
    <property type="entry name" value="COMPLEX1_24K"/>
    <property type="match status" value="1"/>
</dbReference>
<sequence>MFSLALRARASGLTAQWGRHARNLHKTAVQNGAGGALFVHRDTPENNPDTPFDFTPENYERIEAIVRNYPEGHRAAAVLPVLDLAQRQNGWLPISAMNKVAEVLQVPPMRVYEVATFYTMYNRKPVGKYHIQVCTTTPCMLRDSDSILETLQRKLGIKVGETTPDKLFTLIEVECLGACVNAPMVQINDDYYEDLTPKDIEEIIDELRAGKVPKPGPRSGRFCCEPAGGLTSLTEPPKGPGFGVQAGL</sequence>
<organism>
    <name type="scientific">Rattus norvegicus</name>
    <name type="common">Rat</name>
    <dbReference type="NCBI Taxonomy" id="10116"/>
    <lineage>
        <taxon>Eukaryota</taxon>
        <taxon>Metazoa</taxon>
        <taxon>Chordata</taxon>
        <taxon>Craniata</taxon>
        <taxon>Vertebrata</taxon>
        <taxon>Euteleostomi</taxon>
        <taxon>Mammalia</taxon>
        <taxon>Eutheria</taxon>
        <taxon>Euarchontoglires</taxon>
        <taxon>Glires</taxon>
        <taxon>Rodentia</taxon>
        <taxon>Myomorpha</taxon>
        <taxon>Muroidea</taxon>
        <taxon>Muridae</taxon>
        <taxon>Murinae</taxon>
        <taxon>Rattus</taxon>
    </lineage>
</organism>
<proteinExistence type="evidence at protein level"/>